<evidence type="ECO:0000255" key="1">
    <source>
        <dbReference type="HAMAP-Rule" id="MF_01367"/>
    </source>
</evidence>
<evidence type="ECO:0000305" key="2"/>
<sequence length="122" mass="13412">MIQTQSMLDVADNSGARRVMCIKVLGGSHRRYAGIGDIIKVTVKEAIPRGKVKKGQVMTAVVVRTKHGVRRTDGSIIRFDGNAAVLLNNKQEPIGTRIFGPVTRELRTEKFMKIVSLAPEVL</sequence>
<protein>
    <recommendedName>
        <fullName evidence="1">Large ribosomal subunit protein uL14</fullName>
    </recommendedName>
    <alternativeName>
        <fullName evidence="2">50S ribosomal protein L14</fullName>
    </alternativeName>
</protein>
<accession>Q9HWE5</accession>
<dbReference type="EMBL" id="AE004091">
    <property type="protein sequence ID" value="AAG07641.1"/>
    <property type="molecule type" value="Genomic_DNA"/>
</dbReference>
<dbReference type="PIR" id="C83115">
    <property type="entry name" value="C83115"/>
</dbReference>
<dbReference type="RefSeq" id="NP_252943.1">
    <property type="nucleotide sequence ID" value="NC_002516.2"/>
</dbReference>
<dbReference type="RefSeq" id="WP_003093714.1">
    <property type="nucleotide sequence ID" value="NZ_QZGE01000028.1"/>
</dbReference>
<dbReference type="PDB" id="7UNR">
    <property type="method" value="EM"/>
    <property type="resolution" value="2.90 A"/>
    <property type="chains" value="M=1-122"/>
</dbReference>
<dbReference type="PDB" id="7UNU">
    <property type="method" value="EM"/>
    <property type="resolution" value="2.90 A"/>
    <property type="chains" value="M=1-122"/>
</dbReference>
<dbReference type="PDB" id="7UNV">
    <property type="method" value="EM"/>
    <property type="resolution" value="2.70 A"/>
    <property type="chains" value="M=1-122"/>
</dbReference>
<dbReference type="PDB" id="7UNW">
    <property type="method" value="EM"/>
    <property type="resolution" value="2.60 A"/>
    <property type="chains" value="M=1-122"/>
</dbReference>
<dbReference type="PDB" id="8CD1">
    <property type="method" value="EM"/>
    <property type="resolution" value="3.00 A"/>
    <property type="chains" value="K=1-122"/>
</dbReference>
<dbReference type="PDB" id="8RWG">
    <property type="method" value="EM"/>
    <property type="resolution" value="2.46 A"/>
    <property type="chains" value="K=1-122"/>
</dbReference>
<dbReference type="PDBsum" id="7UNR"/>
<dbReference type="PDBsum" id="7UNU"/>
<dbReference type="PDBsum" id="7UNV"/>
<dbReference type="PDBsum" id="7UNW"/>
<dbReference type="PDBsum" id="8CD1"/>
<dbReference type="PDBsum" id="8RWG"/>
<dbReference type="EMDB" id="EMD-16566"/>
<dbReference type="EMDB" id="EMD-19547"/>
<dbReference type="EMDB" id="EMD-26630"/>
<dbReference type="EMDB" id="EMD-26633"/>
<dbReference type="EMDB" id="EMD-26634"/>
<dbReference type="EMDB" id="EMD-26635"/>
<dbReference type="SMR" id="Q9HWE5"/>
<dbReference type="FunCoup" id="Q9HWE5">
    <property type="interactions" value="815"/>
</dbReference>
<dbReference type="STRING" id="208964.PA4253"/>
<dbReference type="PaxDb" id="208964-PA4253"/>
<dbReference type="GeneID" id="77219208"/>
<dbReference type="GeneID" id="881811"/>
<dbReference type="KEGG" id="pae:PA4253"/>
<dbReference type="PATRIC" id="fig|208964.12.peg.4454"/>
<dbReference type="PseudoCAP" id="PA4253"/>
<dbReference type="HOGENOM" id="CLU_095071_2_1_6"/>
<dbReference type="InParanoid" id="Q9HWE5"/>
<dbReference type="OrthoDB" id="9806379at2"/>
<dbReference type="PhylomeDB" id="Q9HWE5"/>
<dbReference type="BioCyc" id="PAER208964:G1FZ6-4326-MONOMER"/>
<dbReference type="PRO" id="PR:Q9HWE5"/>
<dbReference type="Proteomes" id="UP000002438">
    <property type="component" value="Chromosome"/>
</dbReference>
<dbReference type="GO" id="GO:0022625">
    <property type="term" value="C:cytosolic large ribosomal subunit"/>
    <property type="evidence" value="ECO:0000318"/>
    <property type="project" value="GO_Central"/>
</dbReference>
<dbReference type="GO" id="GO:0070180">
    <property type="term" value="F:large ribosomal subunit rRNA binding"/>
    <property type="evidence" value="ECO:0000318"/>
    <property type="project" value="GO_Central"/>
</dbReference>
<dbReference type="GO" id="GO:0003735">
    <property type="term" value="F:structural constituent of ribosome"/>
    <property type="evidence" value="ECO:0000318"/>
    <property type="project" value="GO_Central"/>
</dbReference>
<dbReference type="GO" id="GO:0006412">
    <property type="term" value="P:translation"/>
    <property type="evidence" value="ECO:0007669"/>
    <property type="project" value="UniProtKB-UniRule"/>
</dbReference>
<dbReference type="CDD" id="cd00337">
    <property type="entry name" value="Ribosomal_uL14"/>
    <property type="match status" value="1"/>
</dbReference>
<dbReference type="FunFam" id="2.40.150.20:FF:000001">
    <property type="entry name" value="50S ribosomal protein L14"/>
    <property type="match status" value="1"/>
</dbReference>
<dbReference type="Gene3D" id="2.40.150.20">
    <property type="entry name" value="Ribosomal protein L14"/>
    <property type="match status" value="1"/>
</dbReference>
<dbReference type="HAMAP" id="MF_01367">
    <property type="entry name" value="Ribosomal_uL14"/>
    <property type="match status" value="1"/>
</dbReference>
<dbReference type="InterPro" id="IPR000218">
    <property type="entry name" value="Ribosomal_uL14"/>
</dbReference>
<dbReference type="InterPro" id="IPR005745">
    <property type="entry name" value="Ribosomal_uL14_bac-type"/>
</dbReference>
<dbReference type="InterPro" id="IPR019972">
    <property type="entry name" value="Ribosomal_uL14_CS"/>
</dbReference>
<dbReference type="InterPro" id="IPR036853">
    <property type="entry name" value="Ribosomal_uL14_sf"/>
</dbReference>
<dbReference type="NCBIfam" id="TIGR01067">
    <property type="entry name" value="rplN_bact"/>
    <property type="match status" value="1"/>
</dbReference>
<dbReference type="PANTHER" id="PTHR11761">
    <property type="entry name" value="50S/60S RIBOSOMAL PROTEIN L14/L23"/>
    <property type="match status" value="1"/>
</dbReference>
<dbReference type="PANTHER" id="PTHR11761:SF3">
    <property type="entry name" value="LARGE RIBOSOMAL SUBUNIT PROTEIN UL14M"/>
    <property type="match status" value="1"/>
</dbReference>
<dbReference type="Pfam" id="PF00238">
    <property type="entry name" value="Ribosomal_L14"/>
    <property type="match status" value="1"/>
</dbReference>
<dbReference type="SMART" id="SM01374">
    <property type="entry name" value="Ribosomal_L14"/>
    <property type="match status" value="1"/>
</dbReference>
<dbReference type="SUPFAM" id="SSF50193">
    <property type="entry name" value="Ribosomal protein L14"/>
    <property type="match status" value="1"/>
</dbReference>
<dbReference type="PROSITE" id="PS00049">
    <property type="entry name" value="RIBOSOMAL_L14"/>
    <property type="match status" value="1"/>
</dbReference>
<organism>
    <name type="scientific">Pseudomonas aeruginosa (strain ATCC 15692 / DSM 22644 / CIP 104116 / JCM 14847 / LMG 12228 / 1C / PRS 101 / PAO1)</name>
    <dbReference type="NCBI Taxonomy" id="208964"/>
    <lineage>
        <taxon>Bacteria</taxon>
        <taxon>Pseudomonadati</taxon>
        <taxon>Pseudomonadota</taxon>
        <taxon>Gammaproteobacteria</taxon>
        <taxon>Pseudomonadales</taxon>
        <taxon>Pseudomonadaceae</taxon>
        <taxon>Pseudomonas</taxon>
    </lineage>
</organism>
<keyword id="KW-0002">3D-structure</keyword>
<keyword id="KW-1185">Reference proteome</keyword>
<keyword id="KW-0687">Ribonucleoprotein</keyword>
<keyword id="KW-0689">Ribosomal protein</keyword>
<keyword id="KW-0694">RNA-binding</keyword>
<keyword id="KW-0699">rRNA-binding</keyword>
<name>RL14_PSEAE</name>
<proteinExistence type="evidence at protein level"/>
<comment type="function">
    <text evidence="1">Binds to 23S rRNA. Forms part of two intersubunit bridges in the 70S ribosome.</text>
</comment>
<comment type="subunit">
    <text evidence="1">Part of the 50S ribosomal subunit. Forms a cluster with proteins L3 and L19. In the 70S ribosome, L14 and L19 interact and together make contacts with the 16S rRNA in bridges B5 and B8.</text>
</comment>
<comment type="similarity">
    <text evidence="1">Belongs to the universal ribosomal protein uL14 family.</text>
</comment>
<reference key="1">
    <citation type="journal article" date="2000" name="Nature">
        <title>Complete genome sequence of Pseudomonas aeruginosa PAO1, an opportunistic pathogen.</title>
        <authorList>
            <person name="Stover C.K."/>
            <person name="Pham X.-Q.T."/>
            <person name="Erwin A.L."/>
            <person name="Mizoguchi S.D."/>
            <person name="Warrener P."/>
            <person name="Hickey M.J."/>
            <person name="Brinkman F.S.L."/>
            <person name="Hufnagle W.O."/>
            <person name="Kowalik D.J."/>
            <person name="Lagrou M."/>
            <person name="Garber R.L."/>
            <person name="Goltry L."/>
            <person name="Tolentino E."/>
            <person name="Westbrock-Wadman S."/>
            <person name="Yuan Y."/>
            <person name="Brody L.L."/>
            <person name="Coulter S.N."/>
            <person name="Folger K.R."/>
            <person name="Kas A."/>
            <person name="Larbig K."/>
            <person name="Lim R.M."/>
            <person name="Smith K.A."/>
            <person name="Spencer D.H."/>
            <person name="Wong G.K.-S."/>
            <person name="Wu Z."/>
            <person name="Paulsen I.T."/>
            <person name="Reizer J."/>
            <person name="Saier M.H. Jr."/>
            <person name="Hancock R.E.W."/>
            <person name="Lory S."/>
            <person name="Olson M.V."/>
        </authorList>
    </citation>
    <scope>NUCLEOTIDE SEQUENCE [LARGE SCALE GENOMIC DNA]</scope>
    <source>
        <strain>ATCC 15692 / DSM 22644 / CIP 104116 / JCM 14847 / LMG 12228 / 1C / PRS 101 / PAO1</strain>
    </source>
</reference>
<gene>
    <name evidence="1" type="primary">rplN</name>
    <name type="ordered locus">PA4253</name>
</gene>
<feature type="chain" id="PRO_0000266525" description="Large ribosomal subunit protein uL14">
    <location>
        <begin position="1"/>
        <end position="122"/>
    </location>
</feature>